<keyword id="KW-0325">Glycoprotein</keyword>
<keyword id="KW-0945">Host-virus interaction</keyword>
<keyword id="KW-1100">Inhibition of host NF-kappa-B by virus</keyword>
<keyword id="KW-1185">Reference proteome</keyword>
<keyword id="KW-0732">Signal</keyword>
<organismHost>
    <name type="scientific">Ornithodoros</name>
    <name type="common">relapsing fever ticks</name>
    <dbReference type="NCBI Taxonomy" id="6937"/>
</organismHost>
<organismHost>
    <name type="scientific">Sus scrofa</name>
    <name type="common">Pig</name>
    <dbReference type="NCBI Taxonomy" id="9823"/>
</organismHost>
<proteinExistence type="inferred from homology"/>
<gene>
    <name type="ordered locus">Ba71V-138</name>
    <name type="ORF">I226R</name>
</gene>
<protein>
    <recommendedName>
        <fullName>Late protein I226R</fullName>
        <shortName>pI226R</shortName>
    </recommendedName>
</protein>
<sequence length="226" mass="27006">MKMETFLVCLFHNADGLHQQIQEILYLLRMHIYETNLYLKQELSRLIYPNRQLSFVLLMPLSLLRNWDDIEYLTDVVDDKQTLHYAANLLTNYVLHLSMFQKLTKPYFLLAVKRVSEKLNKRQRHSFYEVLVTSETLNNYENLSKNILNTLMFAVRYVFKPTPNYSEILAELEKKNKIHHIIFNMVIADFAQIRKQQMDKHLCETNNELRQECKETIFDLKVVGNV</sequence>
<reference key="1">
    <citation type="journal article" date="1992" name="Virology">
        <title>Genes homologous to ubiquitin-conjugating proteins and eukaryotic transcription factor SII in African swine fever virus.</title>
        <authorList>
            <person name="Rodriguez J.M."/>
            <person name="Salas M.L."/>
            <person name="Vinuela E."/>
        </authorList>
    </citation>
    <scope>NUCLEOTIDE SEQUENCE [GENOMIC DNA]</scope>
</reference>
<reference key="2">
    <citation type="journal article" date="1995" name="Virology">
        <title>Analysis of the complete nucleotide sequence of African swine fever virus.</title>
        <authorList>
            <person name="Yanez R.J."/>
            <person name="Rodriguez J.M."/>
            <person name="Nogal M.L."/>
            <person name="Yuste L."/>
            <person name="Enriquez C."/>
            <person name="Rodriguez J.F."/>
            <person name="Vinuela E."/>
        </authorList>
    </citation>
    <scope>NUCLEOTIDE SEQUENCE [LARGE SCALE GENOMIC DNA]</scope>
</reference>
<reference key="3">
    <citation type="journal article" date="2013" name="Virus Res.">
        <title>African swine fever virus transcription.</title>
        <authorList>
            <person name="Rodriguez J.M."/>
            <person name="Salas M.L."/>
        </authorList>
    </citation>
    <scope>REVIEW</scope>
</reference>
<reference key="4">
    <citation type="journal article" date="2022" name="Viruses">
        <title>I226R Protein of African Swine Fever Virus Is a Suppressor of Innate Antiviral Responses.</title>
        <authorList>
            <person name="Hong J."/>
            <person name="Chi X."/>
            <person name="Yuan X."/>
            <person name="Wen F."/>
            <person name="Rai K.R."/>
            <person name="Wu L."/>
            <person name="Song Z."/>
            <person name="Wang S."/>
            <person name="Guo G."/>
            <person name="Chen J.L."/>
        </authorList>
    </citation>
    <scope>FUNCTION</scope>
</reference>
<organism>
    <name type="scientific">African swine fever virus (strain Badajoz 1971 Vero-adapted)</name>
    <name type="common">Ba71V</name>
    <name type="synonym">ASFV</name>
    <dbReference type="NCBI Taxonomy" id="10498"/>
    <lineage>
        <taxon>Viruses</taxon>
        <taxon>Varidnaviria</taxon>
        <taxon>Bamfordvirae</taxon>
        <taxon>Nucleocytoviricota</taxon>
        <taxon>Pokkesviricetes</taxon>
        <taxon>Asfuvirales</taxon>
        <taxon>Asfarviridae</taxon>
        <taxon>Asfivirus</taxon>
        <taxon>African swine fever virus</taxon>
    </lineage>
</organism>
<dbReference type="EMBL" id="M77121">
    <property type="protein sequence ID" value="AAA42699.1"/>
    <property type="molecule type" value="Genomic_DNA"/>
</dbReference>
<dbReference type="EMBL" id="U18466">
    <property type="protein sequence ID" value="AAA65366.1"/>
    <property type="molecule type" value="Genomic_DNA"/>
</dbReference>
<dbReference type="PIR" id="A39448">
    <property type="entry name" value="WMXFB1"/>
</dbReference>
<dbReference type="RefSeq" id="NP_042830.1">
    <property type="nucleotide sequence ID" value="NC_001659.2"/>
</dbReference>
<dbReference type="GeneID" id="22220366"/>
<dbReference type="KEGG" id="vg:22220366"/>
<dbReference type="Proteomes" id="UP000000624">
    <property type="component" value="Segment"/>
</dbReference>
<dbReference type="GO" id="GO:0085034">
    <property type="term" value="P:symbiont-mediated suppression of host NF-kappaB cascade"/>
    <property type="evidence" value="ECO:0007669"/>
    <property type="project" value="UniProtKB-KW"/>
</dbReference>
<name>VF226_ASFB7</name>
<accession>P27944</accession>
<evidence type="ECO:0000255" key="1"/>
<evidence type="ECO:0000269" key="2">
    <source>
    </source>
</evidence>
<evidence type="ECO:0000303" key="3">
    <source>
    </source>
</evidence>
<evidence type="ECO:0000305" key="4"/>
<feature type="signal peptide" evidence="1">
    <location>
        <begin position="1"/>
        <end position="16"/>
    </location>
</feature>
<feature type="chain" id="PRO_0000221958" description="Late protein I226R">
    <location>
        <begin position="17"/>
        <end position="226"/>
    </location>
</feature>
<feature type="glycosylation site" description="N-linked (GlcNAc...) asparagine; by host" evidence="1">
    <location>
        <position position="142"/>
    </location>
</feature>
<feature type="glycosylation site" description="N-linked (GlcNAc...) asparagine; by host" evidence="1">
    <location>
        <position position="164"/>
    </location>
</feature>
<comment type="function">
    <text evidence="2">Plays a role in the inhibition of host NF-kappa-B and IRF3 signaling pathways. Mechanistically, promotes the degradation of host IKBKG through enhancing its ubiquitination leading to inhibition of both pathways.</text>
</comment>
<comment type="induction">
    <text evidence="3">Expressed in the intermediate phase of the viral replicative cycle (immediately after DNA replication).</text>
</comment>
<comment type="similarity">
    <text evidence="4">Belongs to the asfivirus I226R family.</text>
</comment>